<dbReference type="EMBL" id="BA000040">
    <property type="protein sequence ID" value="BAC50971.1"/>
    <property type="molecule type" value="Genomic_DNA"/>
</dbReference>
<dbReference type="RefSeq" id="NP_772346.1">
    <property type="nucleotide sequence ID" value="NC_004463.1"/>
</dbReference>
<dbReference type="RefSeq" id="WP_011088452.1">
    <property type="nucleotide sequence ID" value="NC_004463.1"/>
</dbReference>
<dbReference type="SMR" id="Q89ID3"/>
<dbReference type="FunCoup" id="Q89ID3">
    <property type="interactions" value="875"/>
</dbReference>
<dbReference type="STRING" id="224911.AAV28_26045"/>
<dbReference type="EnsemblBacteria" id="BAC50971">
    <property type="protein sequence ID" value="BAC50971"/>
    <property type="gene ID" value="BAC50971"/>
</dbReference>
<dbReference type="GeneID" id="46492709"/>
<dbReference type="KEGG" id="bja:blr5706"/>
<dbReference type="PATRIC" id="fig|224911.44.peg.5637"/>
<dbReference type="eggNOG" id="COG0522">
    <property type="taxonomic scope" value="Bacteria"/>
</dbReference>
<dbReference type="HOGENOM" id="CLU_092403_0_0_5"/>
<dbReference type="InParanoid" id="Q89ID3"/>
<dbReference type="OrthoDB" id="9803672at2"/>
<dbReference type="PhylomeDB" id="Q89ID3"/>
<dbReference type="Proteomes" id="UP000002526">
    <property type="component" value="Chromosome"/>
</dbReference>
<dbReference type="GO" id="GO:0015935">
    <property type="term" value="C:small ribosomal subunit"/>
    <property type="evidence" value="ECO:0000318"/>
    <property type="project" value="GO_Central"/>
</dbReference>
<dbReference type="GO" id="GO:0019843">
    <property type="term" value="F:rRNA binding"/>
    <property type="evidence" value="ECO:0000318"/>
    <property type="project" value="GO_Central"/>
</dbReference>
<dbReference type="GO" id="GO:0003735">
    <property type="term" value="F:structural constituent of ribosome"/>
    <property type="evidence" value="ECO:0000318"/>
    <property type="project" value="GO_Central"/>
</dbReference>
<dbReference type="GO" id="GO:0042274">
    <property type="term" value="P:ribosomal small subunit biogenesis"/>
    <property type="evidence" value="ECO:0000318"/>
    <property type="project" value="GO_Central"/>
</dbReference>
<dbReference type="GO" id="GO:0006412">
    <property type="term" value="P:translation"/>
    <property type="evidence" value="ECO:0007669"/>
    <property type="project" value="UniProtKB-UniRule"/>
</dbReference>
<dbReference type="CDD" id="cd00165">
    <property type="entry name" value="S4"/>
    <property type="match status" value="1"/>
</dbReference>
<dbReference type="FunFam" id="3.10.290.10:FF:000001">
    <property type="entry name" value="30S ribosomal protein S4"/>
    <property type="match status" value="1"/>
</dbReference>
<dbReference type="Gene3D" id="1.10.1050.10">
    <property type="entry name" value="Ribosomal Protein S4 Delta 41, Chain A, domain 1"/>
    <property type="match status" value="1"/>
</dbReference>
<dbReference type="Gene3D" id="3.10.290.10">
    <property type="entry name" value="RNA-binding S4 domain"/>
    <property type="match status" value="1"/>
</dbReference>
<dbReference type="HAMAP" id="MF_01306_B">
    <property type="entry name" value="Ribosomal_uS4_B"/>
    <property type="match status" value="1"/>
</dbReference>
<dbReference type="InterPro" id="IPR022801">
    <property type="entry name" value="Ribosomal_uS4"/>
</dbReference>
<dbReference type="InterPro" id="IPR005709">
    <property type="entry name" value="Ribosomal_uS4_bac-type"/>
</dbReference>
<dbReference type="InterPro" id="IPR018079">
    <property type="entry name" value="Ribosomal_uS4_CS"/>
</dbReference>
<dbReference type="InterPro" id="IPR001912">
    <property type="entry name" value="Ribosomal_uS4_N"/>
</dbReference>
<dbReference type="InterPro" id="IPR002942">
    <property type="entry name" value="S4_RNA-bd"/>
</dbReference>
<dbReference type="InterPro" id="IPR036986">
    <property type="entry name" value="S4_RNA-bd_sf"/>
</dbReference>
<dbReference type="NCBIfam" id="NF003717">
    <property type="entry name" value="PRK05327.1"/>
    <property type="match status" value="1"/>
</dbReference>
<dbReference type="NCBIfam" id="TIGR01017">
    <property type="entry name" value="rpsD_bact"/>
    <property type="match status" value="1"/>
</dbReference>
<dbReference type="PANTHER" id="PTHR11831">
    <property type="entry name" value="30S 40S RIBOSOMAL PROTEIN"/>
    <property type="match status" value="1"/>
</dbReference>
<dbReference type="PANTHER" id="PTHR11831:SF4">
    <property type="entry name" value="SMALL RIBOSOMAL SUBUNIT PROTEIN US4M"/>
    <property type="match status" value="1"/>
</dbReference>
<dbReference type="Pfam" id="PF00163">
    <property type="entry name" value="Ribosomal_S4"/>
    <property type="match status" value="1"/>
</dbReference>
<dbReference type="Pfam" id="PF01479">
    <property type="entry name" value="S4"/>
    <property type="match status" value="1"/>
</dbReference>
<dbReference type="SMART" id="SM01390">
    <property type="entry name" value="Ribosomal_S4"/>
    <property type="match status" value="1"/>
</dbReference>
<dbReference type="SMART" id="SM00363">
    <property type="entry name" value="S4"/>
    <property type="match status" value="1"/>
</dbReference>
<dbReference type="SUPFAM" id="SSF55174">
    <property type="entry name" value="Alpha-L RNA-binding motif"/>
    <property type="match status" value="1"/>
</dbReference>
<dbReference type="PROSITE" id="PS00632">
    <property type="entry name" value="RIBOSOMAL_S4"/>
    <property type="match status" value="1"/>
</dbReference>
<dbReference type="PROSITE" id="PS50889">
    <property type="entry name" value="S4"/>
    <property type="match status" value="1"/>
</dbReference>
<gene>
    <name evidence="1" type="primary">rpsD</name>
    <name type="ordered locus">blr5706</name>
</gene>
<name>RS4_BRADU</name>
<comment type="function">
    <text evidence="1">One of the primary rRNA binding proteins, it binds directly to 16S rRNA where it nucleates assembly of the body of the 30S subunit.</text>
</comment>
<comment type="function">
    <text evidence="1">With S5 and S12 plays an important role in translational accuracy.</text>
</comment>
<comment type="subunit">
    <text evidence="1">Part of the 30S ribosomal subunit. Contacts protein S5. The interaction surface between S4 and S5 is involved in control of translational fidelity.</text>
</comment>
<comment type="similarity">
    <text evidence="1">Belongs to the universal ribosomal protein uS4 family.</text>
</comment>
<proteinExistence type="inferred from homology"/>
<feature type="chain" id="PRO_0000132350" description="Small ribosomal subunit protein uS4">
    <location>
        <begin position="1"/>
        <end position="205"/>
    </location>
</feature>
<feature type="domain" description="S4 RNA-binding" evidence="1">
    <location>
        <begin position="94"/>
        <end position="154"/>
    </location>
</feature>
<feature type="region of interest" description="Disordered" evidence="2">
    <location>
        <begin position="18"/>
        <end position="46"/>
    </location>
</feature>
<accession>Q89ID3</accession>
<organism>
    <name type="scientific">Bradyrhizobium diazoefficiens (strain JCM 10833 / BCRC 13528 / IAM 13628 / NBRC 14792 / USDA 110)</name>
    <dbReference type="NCBI Taxonomy" id="224911"/>
    <lineage>
        <taxon>Bacteria</taxon>
        <taxon>Pseudomonadati</taxon>
        <taxon>Pseudomonadota</taxon>
        <taxon>Alphaproteobacteria</taxon>
        <taxon>Hyphomicrobiales</taxon>
        <taxon>Nitrobacteraceae</taxon>
        <taxon>Bradyrhizobium</taxon>
    </lineage>
</organism>
<keyword id="KW-1185">Reference proteome</keyword>
<keyword id="KW-0687">Ribonucleoprotein</keyword>
<keyword id="KW-0689">Ribosomal protein</keyword>
<keyword id="KW-0694">RNA-binding</keyword>
<keyword id="KW-0699">rRNA-binding</keyword>
<protein>
    <recommendedName>
        <fullName evidence="1">Small ribosomal subunit protein uS4</fullName>
    </recommendedName>
    <alternativeName>
        <fullName evidence="3">30S ribosomal protein S4</fullName>
    </alternativeName>
</protein>
<sequence length="205" mass="23508">MTKRSEAKYKIDRRMGQNIWGRPKSPVNRREYGPGQHGQRRKGKLSDFGVQLRAKQKLKGYYANISERQFHGIYVEASRLKGDTGENLIGLLERRLDAVVYRAKFVSTIFAARQFINHGHIKVNGRKVNISSYQLKVGDVVEVKEASKQLAHVLEASQLPERDTPDYLDVDHGKMTAKYIRIPGLSDVPFPVQMEPHLVVEFYSR</sequence>
<evidence type="ECO:0000255" key="1">
    <source>
        <dbReference type="HAMAP-Rule" id="MF_01306"/>
    </source>
</evidence>
<evidence type="ECO:0000256" key="2">
    <source>
        <dbReference type="SAM" id="MobiDB-lite"/>
    </source>
</evidence>
<evidence type="ECO:0000305" key="3"/>
<reference key="1">
    <citation type="journal article" date="2002" name="DNA Res.">
        <title>Complete genomic sequence of nitrogen-fixing symbiotic bacterium Bradyrhizobium japonicum USDA110.</title>
        <authorList>
            <person name="Kaneko T."/>
            <person name="Nakamura Y."/>
            <person name="Sato S."/>
            <person name="Minamisawa K."/>
            <person name="Uchiumi T."/>
            <person name="Sasamoto S."/>
            <person name="Watanabe A."/>
            <person name="Idesawa K."/>
            <person name="Iriguchi M."/>
            <person name="Kawashima K."/>
            <person name="Kohara M."/>
            <person name="Matsumoto M."/>
            <person name="Shimpo S."/>
            <person name="Tsuruoka H."/>
            <person name="Wada T."/>
            <person name="Yamada M."/>
            <person name="Tabata S."/>
        </authorList>
    </citation>
    <scope>NUCLEOTIDE SEQUENCE [LARGE SCALE GENOMIC DNA]</scope>
    <source>
        <strain>JCM 10833 / BCRC 13528 / IAM 13628 / NBRC 14792 / USDA 110</strain>
    </source>
</reference>